<gene>
    <name type="primary">caf17</name>
    <name type="ORF">NFIA_074770</name>
</gene>
<accession>A1DDV0</accession>
<evidence type="ECO:0000250" key="1">
    <source>
        <dbReference type="UniProtKB" id="P47158"/>
    </source>
</evidence>
<evidence type="ECO:0000255" key="2"/>
<evidence type="ECO:0000256" key="3">
    <source>
        <dbReference type="SAM" id="MobiDB-lite"/>
    </source>
</evidence>
<evidence type="ECO:0000305" key="4"/>
<feature type="transit peptide" description="Mitochondrion" evidence="2">
    <location>
        <begin position="1"/>
        <end position="28"/>
    </location>
</feature>
<feature type="chain" id="PRO_0000301703" description="Iron-sulfur cluster assembly factor IBA57 homolog, mitochondrial">
    <location>
        <begin position="29"/>
        <end position="447"/>
    </location>
</feature>
<feature type="region of interest" description="Disordered" evidence="3">
    <location>
        <begin position="367"/>
        <end position="396"/>
    </location>
</feature>
<dbReference type="EMBL" id="DS027696">
    <property type="protein sequence ID" value="EAW17557.1"/>
    <property type="status" value="ALT_INIT"/>
    <property type="molecule type" value="Genomic_DNA"/>
</dbReference>
<dbReference type="RefSeq" id="XP_001259454.1">
    <property type="nucleotide sequence ID" value="XM_001259453.1"/>
</dbReference>
<dbReference type="SMR" id="A1DDV0"/>
<dbReference type="STRING" id="331117.A1DDV0"/>
<dbReference type="EnsemblFungi" id="EAW17557">
    <property type="protein sequence ID" value="EAW17557"/>
    <property type="gene ID" value="NFIA_074770"/>
</dbReference>
<dbReference type="GeneID" id="4585840"/>
<dbReference type="KEGG" id="nfi:NFIA_074770"/>
<dbReference type="VEuPathDB" id="FungiDB:NFIA_074770"/>
<dbReference type="eggNOG" id="KOG2929">
    <property type="taxonomic scope" value="Eukaryota"/>
</dbReference>
<dbReference type="OrthoDB" id="191995at2759"/>
<dbReference type="Proteomes" id="UP000006702">
    <property type="component" value="Unassembled WGS sequence"/>
</dbReference>
<dbReference type="GO" id="GO:0005759">
    <property type="term" value="C:mitochondrial matrix"/>
    <property type="evidence" value="ECO:0007669"/>
    <property type="project" value="TreeGrafter"/>
</dbReference>
<dbReference type="GO" id="GO:0016740">
    <property type="term" value="F:transferase activity"/>
    <property type="evidence" value="ECO:0007669"/>
    <property type="project" value="UniProtKB-KW"/>
</dbReference>
<dbReference type="GO" id="GO:0016226">
    <property type="term" value="P:iron-sulfur cluster assembly"/>
    <property type="evidence" value="ECO:0007669"/>
    <property type="project" value="TreeGrafter"/>
</dbReference>
<dbReference type="FunFam" id="3.30.1360.120:FF:000028">
    <property type="entry name" value="Putative transferase caf17, mitochondrial"/>
    <property type="match status" value="1"/>
</dbReference>
<dbReference type="Gene3D" id="3.30.1360.120">
    <property type="entry name" value="Probable tRNA modification gtpase trme, domain 1"/>
    <property type="match status" value="1"/>
</dbReference>
<dbReference type="InterPro" id="IPR027266">
    <property type="entry name" value="TrmE/GcvT_dom1"/>
</dbReference>
<dbReference type="InterPro" id="IPR045179">
    <property type="entry name" value="YgfZ/GcvT"/>
</dbReference>
<dbReference type="InterPro" id="IPR017703">
    <property type="entry name" value="YgfZ/GcvT_CS"/>
</dbReference>
<dbReference type="NCBIfam" id="TIGR03317">
    <property type="entry name" value="ygfZ_signature"/>
    <property type="match status" value="1"/>
</dbReference>
<dbReference type="PANTHER" id="PTHR22602">
    <property type="entry name" value="TRANSFERASE CAF17, MITOCHONDRIAL-RELATED"/>
    <property type="match status" value="1"/>
</dbReference>
<dbReference type="PANTHER" id="PTHR22602:SF0">
    <property type="entry name" value="TRANSFERASE CAF17, MITOCHONDRIAL-RELATED"/>
    <property type="match status" value="1"/>
</dbReference>
<dbReference type="Pfam" id="PF25455">
    <property type="entry name" value="Beta-barrel_CAF17_C"/>
    <property type="match status" value="1"/>
</dbReference>
<dbReference type="SUPFAM" id="SSF103025">
    <property type="entry name" value="Folate-binding domain"/>
    <property type="match status" value="1"/>
</dbReference>
<protein>
    <recommendedName>
        <fullName>Iron-sulfur cluster assembly factor IBA57 homolog, mitochondrial</fullName>
    </recommendedName>
</protein>
<keyword id="KW-0496">Mitochondrion</keyword>
<keyword id="KW-1185">Reference proteome</keyword>
<keyword id="KW-0809">Transit peptide</keyword>
<proteinExistence type="inferred from homology"/>
<comment type="subcellular location">
    <subcellularLocation>
        <location evidence="1">Mitochondrion matrix</location>
    </subcellularLocation>
</comment>
<comment type="similarity">
    <text evidence="4">Belongs to the GcvT family. CAF17/IBA57 subfamily.</text>
</comment>
<comment type="sequence caution" evidence="4">
    <conflict type="erroneous initiation">
        <sequence resource="EMBL-CDS" id="EAW17557"/>
    </conflict>
</comment>
<reference key="1">
    <citation type="journal article" date="2008" name="PLoS Genet.">
        <title>Genomic islands in the pathogenic filamentous fungus Aspergillus fumigatus.</title>
        <authorList>
            <person name="Fedorova N.D."/>
            <person name="Khaldi N."/>
            <person name="Joardar V.S."/>
            <person name="Maiti R."/>
            <person name="Amedeo P."/>
            <person name="Anderson M.J."/>
            <person name="Crabtree J."/>
            <person name="Silva J.C."/>
            <person name="Badger J.H."/>
            <person name="Albarraq A."/>
            <person name="Angiuoli S."/>
            <person name="Bussey H."/>
            <person name="Bowyer P."/>
            <person name="Cotty P.J."/>
            <person name="Dyer P.S."/>
            <person name="Egan A."/>
            <person name="Galens K."/>
            <person name="Fraser-Liggett C.M."/>
            <person name="Haas B.J."/>
            <person name="Inman J.M."/>
            <person name="Kent R."/>
            <person name="Lemieux S."/>
            <person name="Malavazi I."/>
            <person name="Orvis J."/>
            <person name="Roemer T."/>
            <person name="Ronning C.M."/>
            <person name="Sundaram J.P."/>
            <person name="Sutton G."/>
            <person name="Turner G."/>
            <person name="Venter J.C."/>
            <person name="White O.R."/>
            <person name="Whitty B.R."/>
            <person name="Youngman P."/>
            <person name="Wolfe K.H."/>
            <person name="Goldman G.H."/>
            <person name="Wortman J.R."/>
            <person name="Jiang B."/>
            <person name="Denning D.W."/>
            <person name="Nierman W.C."/>
        </authorList>
    </citation>
    <scope>NUCLEOTIDE SEQUENCE [LARGE SCALE GENOMIC DNA]</scope>
    <source>
        <strain>ATCC 1020 / DSM 3700 / CBS 544.65 / FGSC A1164 / JCM 1740 / NRRL 181 / WB 181</strain>
    </source>
</reference>
<sequence length="447" mass="49068">MRSIASSKRVCTHCLSHSRLFSTTVQHRAQPSSDAVPSSPPRSGYARLTNRGLISITGVDSTTFLQGLITQNMLVANDPSRATRRTGTYTAFLNSQGRVLNDAFIYPMPKGDGETATTDDPAWLVEVDKNEVSSLLKHLKKHKLRSKLKLRALEDGERTVWSSWKDHSEPRWAAYNLESESSSPFSPSSSVAGCIDTRAPGFGSRLVTPGEEDLRVHLPDEAQVAGSEVDLGTYTVRRMLHGIAEGQAEIIRESALPLECNMDMMRGVDFRKGCYVGQELTIRTHHTGVVRKRIVPVQLYAKSPLPSGETPVYDPTAAVALPPSGSNISKVDGRKGRSAGKFLGGVGNIGLALCRLEIMTDIVLTGEGSQSSPEQEFKISWSAPEEASSDTTEPAEVKVKALVPPWLREYISSGARNLARKVDSQEGHRAKELLYQLEEEEEQRRNE</sequence>
<organism>
    <name type="scientific">Neosartorya fischeri (strain ATCC 1020 / DSM 3700 / CBS 544.65 / FGSC A1164 / JCM 1740 / NRRL 181 / WB 181)</name>
    <name type="common">Aspergillus fischerianus</name>
    <dbReference type="NCBI Taxonomy" id="331117"/>
    <lineage>
        <taxon>Eukaryota</taxon>
        <taxon>Fungi</taxon>
        <taxon>Dikarya</taxon>
        <taxon>Ascomycota</taxon>
        <taxon>Pezizomycotina</taxon>
        <taxon>Eurotiomycetes</taxon>
        <taxon>Eurotiomycetidae</taxon>
        <taxon>Eurotiales</taxon>
        <taxon>Aspergillaceae</taxon>
        <taxon>Aspergillus</taxon>
        <taxon>Aspergillus subgen. Fumigati</taxon>
    </lineage>
</organism>
<name>CAF17_NEOFI</name>